<protein>
    <recommendedName>
        <fullName>Alpha-fibrinogenase A2</fullName>
        <ecNumber>3.4.21.-</ecNumber>
    </recommendedName>
    <alternativeName>
        <fullName>Snake venom serine protease</fullName>
        <shortName>SVSP</shortName>
    </alternativeName>
</protein>
<sequence>VPGGDECNINEHRSL</sequence>
<name>VSPA2_CROAT</name>
<comment type="function">
    <text evidence="2">Snake venom serine protease that cleaves fibrinogen Aalpha chain (FGA), partially cleaves Bbeta chain (FGB) and has no activity on gamma chain. Is more potent than A3 alpha-fibrinogenases and less potent than A1.</text>
</comment>
<comment type="activity regulation">
    <text evidence="2">Inhibited by PMSF, bovine aprotinin (APR), and soybean trypsin inhibitor (STI). Is not inhibited by EDTA, beta-mercaptoethanol, and high temperature (85 degrees Celsius).</text>
</comment>
<comment type="subunit">
    <text evidence="2">Monomer.</text>
</comment>
<comment type="subcellular location">
    <subcellularLocation>
        <location evidence="2">Secreted</location>
    </subcellularLocation>
</comment>
<comment type="tissue specificity">
    <text evidence="2">Expressed by the venom gland.</text>
</comment>
<comment type="similarity">
    <text evidence="1">Belongs to the peptidase S1 family. Snake venom subfamily.</text>
</comment>
<reference key="1">
    <citation type="journal article" date="1994" name="Biochem. Biophys. Res. Commun.">
        <title>Isolation of multiple isoforms of alpha-fibrinogenase from the Western diamondback rattlesnake, Crotalus atrox: N-terminal sequence homology with ancrod, an antithrombotic agent from Malayan viper.</title>
        <authorList>
            <person name="Hung C.C."/>
            <person name="Chiou S.H."/>
        </authorList>
    </citation>
    <scope>PROTEIN SEQUENCE</scope>
    <scope>FUNCTION</scope>
    <scope>ACTIVITY REGULATION</scope>
    <scope>SUBUNIT</scope>
    <scope>SUBCELLULAR LOCATION</scope>
    <scope>TISSUE SPECIFICITY</scope>
    <source>
        <tissue>Venom</tissue>
    </source>
</reference>
<evidence type="ECO:0000255" key="1">
    <source>
        <dbReference type="PROSITE-ProRule" id="PRU00274"/>
    </source>
</evidence>
<evidence type="ECO:0000269" key="2">
    <source>
    </source>
</evidence>
<keyword id="KW-0903">Direct protein sequencing</keyword>
<keyword id="KW-1015">Disulfide bond</keyword>
<keyword id="KW-1206">Fibrinogenolytic toxin</keyword>
<keyword id="KW-1199">Hemostasis impairing toxin</keyword>
<keyword id="KW-0378">Hydrolase</keyword>
<keyword id="KW-0645">Protease</keyword>
<keyword id="KW-0964">Secreted</keyword>
<keyword id="KW-0720">Serine protease</keyword>
<keyword id="KW-0800">Toxin</keyword>
<dbReference type="EC" id="3.4.21.-"/>
<dbReference type="PIR" id="PC2215">
    <property type="entry name" value="PC2215"/>
</dbReference>
<dbReference type="GO" id="GO:0005615">
    <property type="term" value="C:extracellular space"/>
    <property type="evidence" value="ECO:0000314"/>
    <property type="project" value="UniProtKB"/>
</dbReference>
<dbReference type="GO" id="GO:0004252">
    <property type="term" value="F:serine-type endopeptidase activity"/>
    <property type="evidence" value="ECO:0000314"/>
    <property type="project" value="UniProtKB"/>
</dbReference>
<dbReference type="GO" id="GO:0090729">
    <property type="term" value="F:toxin activity"/>
    <property type="evidence" value="ECO:0007669"/>
    <property type="project" value="UniProtKB-KW"/>
</dbReference>
<dbReference type="GO" id="GO:0006508">
    <property type="term" value="P:proteolysis"/>
    <property type="evidence" value="ECO:0007669"/>
    <property type="project" value="UniProtKB-KW"/>
</dbReference>
<proteinExistence type="evidence at protein level"/>
<organism>
    <name type="scientific">Crotalus atrox</name>
    <name type="common">Western diamondback rattlesnake</name>
    <dbReference type="NCBI Taxonomy" id="8730"/>
    <lineage>
        <taxon>Eukaryota</taxon>
        <taxon>Metazoa</taxon>
        <taxon>Chordata</taxon>
        <taxon>Craniata</taxon>
        <taxon>Vertebrata</taxon>
        <taxon>Euteleostomi</taxon>
        <taxon>Lepidosauria</taxon>
        <taxon>Squamata</taxon>
        <taxon>Bifurcata</taxon>
        <taxon>Unidentata</taxon>
        <taxon>Episquamata</taxon>
        <taxon>Toxicofera</taxon>
        <taxon>Serpentes</taxon>
        <taxon>Colubroidea</taxon>
        <taxon>Viperidae</taxon>
        <taxon>Crotalinae</taxon>
        <taxon>Crotalus</taxon>
    </lineage>
</organism>
<accession>Q9PRW3</accession>
<feature type="chain" id="PRO_0000406905" description="Alpha-fibrinogenase A2">
    <location>
        <begin position="1"/>
        <end position="15" status="greater than"/>
    </location>
</feature>
<feature type="disulfide bond">
    <location>
        <begin position="7"/>
        <end status="unknown"/>
    </location>
</feature>
<feature type="non-terminal residue">
    <location>
        <position position="15"/>
    </location>
</feature>